<feature type="chain" id="PRO_0000240301" description="Small ribosomal subunit protein eS28">
    <location>
        <begin position="1"/>
        <end position="69"/>
    </location>
</feature>
<feature type="modified residue" description="N-acetylmethionine" evidence="2">
    <location>
        <position position="1"/>
    </location>
</feature>
<feature type="modified residue" description="Phosphoserine" evidence="1">
    <location>
        <position position="41"/>
    </location>
</feature>
<protein>
    <recommendedName>
        <fullName evidence="4">Small ribosomal subunit protein eS28</fullName>
    </recommendedName>
    <alternativeName>
        <fullName>40S ribosomal protein S28</fullName>
    </alternativeName>
</protein>
<sequence length="69" mass="7841">MDTSRVQPIKLARVTKVLGRTGSQGQCTQVRVEFMDDTSRSIIRNVKGPVREGDVLTLLESEREARRLR</sequence>
<keyword id="KW-0007">Acetylation</keyword>
<keyword id="KW-0963">Cytoplasm</keyword>
<keyword id="KW-0256">Endoplasmic reticulum</keyword>
<keyword id="KW-0539">Nucleus</keyword>
<keyword id="KW-0597">Phosphoprotein</keyword>
<keyword id="KW-1185">Reference proteome</keyword>
<keyword id="KW-0687">Ribonucleoprotein</keyword>
<keyword id="KW-0689">Ribosomal protein</keyword>
<organism>
    <name type="scientific">Bos taurus</name>
    <name type="common">Bovine</name>
    <dbReference type="NCBI Taxonomy" id="9913"/>
    <lineage>
        <taxon>Eukaryota</taxon>
        <taxon>Metazoa</taxon>
        <taxon>Chordata</taxon>
        <taxon>Craniata</taxon>
        <taxon>Vertebrata</taxon>
        <taxon>Euteleostomi</taxon>
        <taxon>Mammalia</taxon>
        <taxon>Eutheria</taxon>
        <taxon>Laurasiatheria</taxon>
        <taxon>Artiodactyla</taxon>
        <taxon>Ruminantia</taxon>
        <taxon>Pecora</taxon>
        <taxon>Bovidae</taxon>
        <taxon>Bovinae</taxon>
        <taxon>Bos</taxon>
    </lineage>
</organism>
<gene>
    <name type="primary">RPS28</name>
</gene>
<comment type="function">
    <text evidence="1">Component of the small ribosomal subunit. The ribosome is a large ribonucleoprotein complex responsible for the synthesis of proteins in the cell. Part of the small subunit (SSU) processome, first precursor of the small eukaryotic ribosomal subunit. During the assembly of the SSU processome in the nucleolus, many ribosome biogenesis factors, an RNA chaperone and ribosomal proteins associate with the nascent pre-rRNA and work in concert to generate RNA folding, modifications, rearrangements and cleavage as well as targeted degradation of pre-ribosomal RNA by the RNA exosome.</text>
</comment>
<comment type="subunit">
    <text evidence="1">Component of the 40S small ribosomal subunit. Part of the small subunit (SSU) processome, composed of more than 70 proteins and the RNA chaperone small nucleolar RNA (snoRNA) U3.</text>
</comment>
<comment type="subcellular location">
    <subcellularLocation>
        <location evidence="1">Cytoplasm</location>
        <location evidence="1">Cytosol</location>
    </subcellularLocation>
    <subcellularLocation>
        <location evidence="1">Cytoplasm</location>
    </subcellularLocation>
    <subcellularLocation>
        <location evidence="3">Rough endoplasmic reticulum</location>
    </subcellularLocation>
    <subcellularLocation>
        <location evidence="1">Nucleus</location>
        <location evidence="1">Nucleolus</location>
    </subcellularLocation>
    <text evidence="1 3">Detected on cytosolic polysomes (By similarity). Detected in ribosomes that are associated with the rough endoplasmic reticulum (By similarity).</text>
</comment>
<comment type="similarity">
    <text evidence="4">Belongs to the eukaryotic ribosomal protein eS28 family.</text>
</comment>
<name>RS28_BOVIN</name>
<accession>Q56JX6</accession>
<reference key="1">
    <citation type="submission" date="2005-01" db="EMBL/GenBank/DDBJ databases">
        <title>Analysis of sequences obtained from constructed full-length bovine cDNA libraries.</title>
        <authorList>
            <person name="Yu J."/>
            <person name="Meng Y."/>
            <person name="Wang Z."/>
            <person name="Hansen C."/>
            <person name="Li C."/>
            <person name="Moore S.S."/>
        </authorList>
    </citation>
    <scope>NUCLEOTIDE SEQUENCE [LARGE SCALE MRNA]</scope>
    <source>
        <tissue>Lymphoid epithelium</tissue>
    </source>
</reference>
<reference key="2">
    <citation type="submission" date="2005-08" db="EMBL/GenBank/DDBJ databases">
        <authorList>
            <consortium name="NIH - Mammalian Gene Collection (MGC) project"/>
        </authorList>
    </citation>
    <scope>NUCLEOTIDE SEQUENCE [LARGE SCALE MRNA]</scope>
    <source>
        <strain>Hereford</strain>
        <tissue>Testis</tissue>
    </source>
</reference>
<proteinExistence type="inferred from homology"/>
<dbReference type="EMBL" id="AY911353">
    <property type="protein sequence ID" value="AAW82119.1"/>
    <property type="molecule type" value="mRNA"/>
</dbReference>
<dbReference type="EMBL" id="BC102565">
    <property type="protein sequence ID" value="AAI02566.1"/>
    <property type="molecule type" value="mRNA"/>
</dbReference>
<dbReference type="RefSeq" id="NP_001020487.1">
    <property type="nucleotide sequence ID" value="NM_001025316.2"/>
</dbReference>
<dbReference type="SMR" id="Q56JX6"/>
<dbReference type="FunCoup" id="Q56JX6">
    <property type="interactions" value="2299"/>
</dbReference>
<dbReference type="STRING" id="9913.ENSBTAP00000003201"/>
<dbReference type="PaxDb" id="9913-ENSBTAP00000003201"/>
<dbReference type="PeptideAtlas" id="Q56JX6"/>
<dbReference type="GeneID" id="282877"/>
<dbReference type="KEGG" id="bta:282877"/>
<dbReference type="CTD" id="6234"/>
<dbReference type="VEuPathDB" id="HostDB:ENSBTAG00000002468"/>
<dbReference type="eggNOG" id="KOG3502">
    <property type="taxonomic scope" value="Eukaryota"/>
</dbReference>
<dbReference type="HOGENOM" id="CLU_178987_1_0_1"/>
<dbReference type="InParanoid" id="Q56JX6"/>
<dbReference type="OMA" id="NTGMHGE"/>
<dbReference type="OrthoDB" id="10258930at2759"/>
<dbReference type="TreeFam" id="TF300136"/>
<dbReference type="Reactome" id="R-BTA-156827">
    <property type="pathway name" value="L13a-mediated translational silencing of Ceruloplasmin expression"/>
</dbReference>
<dbReference type="Reactome" id="R-BTA-1799339">
    <property type="pathway name" value="SRP-dependent cotranslational protein targeting to membrane"/>
</dbReference>
<dbReference type="Reactome" id="R-BTA-6791226">
    <property type="pathway name" value="Major pathway of rRNA processing in the nucleolus and cytosol"/>
</dbReference>
<dbReference type="Reactome" id="R-BTA-72649">
    <property type="pathway name" value="Translation initiation complex formation"/>
</dbReference>
<dbReference type="Reactome" id="R-BTA-72689">
    <property type="pathway name" value="Formation of a pool of free 40S subunits"/>
</dbReference>
<dbReference type="Reactome" id="R-BTA-72695">
    <property type="pathway name" value="Formation of the ternary complex, and subsequently, the 43S complex"/>
</dbReference>
<dbReference type="Reactome" id="R-BTA-72702">
    <property type="pathway name" value="Ribosomal scanning and start codon recognition"/>
</dbReference>
<dbReference type="Reactome" id="R-BTA-72706">
    <property type="pathway name" value="GTP hydrolysis and joining of the 60S ribosomal subunit"/>
</dbReference>
<dbReference type="Reactome" id="R-BTA-975956">
    <property type="pathway name" value="Nonsense Mediated Decay (NMD) independent of the Exon Junction Complex (EJC)"/>
</dbReference>
<dbReference type="Reactome" id="R-BTA-975957">
    <property type="pathway name" value="Nonsense Mediated Decay (NMD) enhanced by the Exon Junction Complex (EJC)"/>
</dbReference>
<dbReference type="CD-CODE" id="D7FE2080">
    <property type="entry name" value="Nucleolus"/>
</dbReference>
<dbReference type="Proteomes" id="UP000009136">
    <property type="component" value="Chromosome 7"/>
</dbReference>
<dbReference type="Bgee" id="ENSBTAG00000002468">
    <property type="expression patterns" value="Expressed in isthmus of fallopian tube and 104 other cell types or tissues"/>
</dbReference>
<dbReference type="GO" id="GO:0098556">
    <property type="term" value="C:cytoplasmic side of rough endoplasmic reticulum membrane"/>
    <property type="evidence" value="ECO:0000250"/>
    <property type="project" value="UniProtKB"/>
</dbReference>
<dbReference type="GO" id="GO:0022627">
    <property type="term" value="C:cytosolic small ribosomal subunit"/>
    <property type="evidence" value="ECO:0000250"/>
    <property type="project" value="UniProtKB"/>
</dbReference>
<dbReference type="GO" id="GO:0005730">
    <property type="term" value="C:nucleolus"/>
    <property type="evidence" value="ECO:0007669"/>
    <property type="project" value="UniProtKB-SubCell"/>
</dbReference>
<dbReference type="GO" id="GO:0005840">
    <property type="term" value="C:ribosome"/>
    <property type="evidence" value="ECO:0000250"/>
    <property type="project" value="UniProtKB"/>
</dbReference>
<dbReference type="GO" id="GO:0032040">
    <property type="term" value="C:small-subunit processome"/>
    <property type="evidence" value="ECO:0000250"/>
    <property type="project" value="UniProtKB"/>
</dbReference>
<dbReference type="GO" id="GO:0045202">
    <property type="term" value="C:synapse"/>
    <property type="evidence" value="ECO:0007669"/>
    <property type="project" value="Ensembl"/>
</dbReference>
<dbReference type="GO" id="GO:0003735">
    <property type="term" value="F:structural constituent of ribosome"/>
    <property type="evidence" value="ECO:0000318"/>
    <property type="project" value="GO_Central"/>
</dbReference>
<dbReference type="GO" id="GO:0002181">
    <property type="term" value="P:cytoplasmic translation"/>
    <property type="evidence" value="ECO:0000250"/>
    <property type="project" value="UniProtKB"/>
</dbReference>
<dbReference type="GO" id="GO:0030490">
    <property type="term" value="P:maturation of SSU-rRNA"/>
    <property type="evidence" value="ECO:0000318"/>
    <property type="project" value="GO_Central"/>
</dbReference>
<dbReference type="GO" id="GO:0000028">
    <property type="term" value="P:ribosomal small subunit assembly"/>
    <property type="evidence" value="ECO:0000318"/>
    <property type="project" value="GO_Central"/>
</dbReference>
<dbReference type="GO" id="GO:0042274">
    <property type="term" value="P:ribosomal small subunit biogenesis"/>
    <property type="evidence" value="ECO:0000250"/>
    <property type="project" value="UniProtKB"/>
</dbReference>
<dbReference type="GO" id="GO:0042254">
    <property type="term" value="P:ribosome biogenesis"/>
    <property type="evidence" value="ECO:0000250"/>
    <property type="project" value="UniProtKB"/>
</dbReference>
<dbReference type="CDD" id="cd04457">
    <property type="entry name" value="S1_S28E"/>
    <property type="match status" value="1"/>
</dbReference>
<dbReference type="FunFam" id="2.40.50.140:FF:000025">
    <property type="entry name" value="40S ribosomal protein S28"/>
    <property type="match status" value="1"/>
</dbReference>
<dbReference type="Gene3D" id="2.40.50.140">
    <property type="entry name" value="Nucleic acid-binding proteins"/>
    <property type="match status" value="1"/>
</dbReference>
<dbReference type="HAMAP" id="MF_00292">
    <property type="entry name" value="Ribosomal_eS28"/>
    <property type="match status" value="1"/>
</dbReference>
<dbReference type="InterPro" id="IPR012340">
    <property type="entry name" value="NA-bd_OB-fold"/>
</dbReference>
<dbReference type="InterPro" id="IPR000289">
    <property type="entry name" value="Ribosomal_eS28"/>
</dbReference>
<dbReference type="InterPro" id="IPR028626">
    <property type="entry name" value="Ribosomal_eS28_CS"/>
</dbReference>
<dbReference type="PANTHER" id="PTHR10769">
    <property type="entry name" value="40S RIBOSOMAL PROTEIN S28"/>
    <property type="match status" value="1"/>
</dbReference>
<dbReference type="PANTHER" id="PTHR10769:SF3">
    <property type="entry name" value="SMALL RIBOSOMAL SUBUNIT PROTEIN ES28"/>
    <property type="match status" value="1"/>
</dbReference>
<dbReference type="Pfam" id="PF01200">
    <property type="entry name" value="Ribosomal_S28e"/>
    <property type="match status" value="1"/>
</dbReference>
<dbReference type="SUPFAM" id="SSF50249">
    <property type="entry name" value="Nucleic acid-binding proteins"/>
    <property type="match status" value="1"/>
</dbReference>
<dbReference type="PROSITE" id="PS00961">
    <property type="entry name" value="RIBOSOMAL_S28E"/>
    <property type="match status" value="1"/>
</dbReference>
<evidence type="ECO:0000250" key="1">
    <source>
        <dbReference type="UniProtKB" id="P62857"/>
    </source>
</evidence>
<evidence type="ECO:0000250" key="2">
    <source>
        <dbReference type="UniProtKB" id="P62859"/>
    </source>
</evidence>
<evidence type="ECO:0000250" key="3">
    <source>
        <dbReference type="UniProtKB" id="Q6QAT1"/>
    </source>
</evidence>
<evidence type="ECO:0000305" key="4"/>